<organism>
    <name type="scientific">Helicobacter pylori (strain J99 / ATCC 700824)</name>
    <name type="common">Campylobacter pylori J99</name>
    <dbReference type="NCBI Taxonomy" id="85963"/>
    <lineage>
        <taxon>Bacteria</taxon>
        <taxon>Pseudomonadati</taxon>
        <taxon>Campylobacterota</taxon>
        <taxon>Epsilonproteobacteria</taxon>
        <taxon>Campylobacterales</taxon>
        <taxon>Helicobacteraceae</taxon>
        <taxon>Helicobacter</taxon>
    </lineage>
</organism>
<sequence length="141" mass="16062">MLMPKRTKYRKQMKGRNRGKAHRGNSIAFGDIAIKAIEHGRIDSRQIESARVAMTRHIKRAGKVWIRVFPDKPLTAKPLETRMGKGKGSVEKWVMNIKPGRIVYEMLGIEEGLAREALALSQSKLPFKTKIVTCESENEIY</sequence>
<proteinExistence type="inferred from homology"/>
<evidence type="ECO:0000255" key="1">
    <source>
        <dbReference type="HAMAP-Rule" id="MF_01342"/>
    </source>
</evidence>
<evidence type="ECO:0000256" key="2">
    <source>
        <dbReference type="SAM" id="MobiDB-lite"/>
    </source>
</evidence>
<evidence type="ECO:0000305" key="3"/>
<feature type="chain" id="PRO_0000062116" description="Large ribosomal subunit protein uL16">
    <location>
        <begin position="1"/>
        <end position="141"/>
    </location>
</feature>
<feature type="region of interest" description="Disordered" evidence="2">
    <location>
        <begin position="1"/>
        <end position="23"/>
    </location>
</feature>
<gene>
    <name evidence="1" type="primary">rplP</name>
    <name type="ordered locus">jhp_1232</name>
</gene>
<dbReference type="EMBL" id="AE001439">
    <property type="protein sequence ID" value="AAD06798.1"/>
    <property type="molecule type" value="Genomic_DNA"/>
</dbReference>
<dbReference type="PIR" id="H71834">
    <property type="entry name" value="H71834"/>
</dbReference>
<dbReference type="RefSeq" id="WP_000928962.1">
    <property type="nucleotide sequence ID" value="NC_000921.1"/>
</dbReference>
<dbReference type="SMR" id="Q9ZJS0"/>
<dbReference type="KEGG" id="hpj:jhp_1232"/>
<dbReference type="eggNOG" id="COG0197">
    <property type="taxonomic scope" value="Bacteria"/>
</dbReference>
<dbReference type="Proteomes" id="UP000000804">
    <property type="component" value="Chromosome"/>
</dbReference>
<dbReference type="GO" id="GO:0022625">
    <property type="term" value="C:cytosolic large ribosomal subunit"/>
    <property type="evidence" value="ECO:0007669"/>
    <property type="project" value="TreeGrafter"/>
</dbReference>
<dbReference type="GO" id="GO:0019843">
    <property type="term" value="F:rRNA binding"/>
    <property type="evidence" value="ECO:0007669"/>
    <property type="project" value="UniProtKB-UniRule"/>
</dbReference>
<dbReference type="GO" id="GO:0003735">
    <property type="term" value="F:structural constituent of ribosome"/>
    <property type="evidence" value="ECO:0007669"/>
    <property type="project" value="InterPro"/>
</dbReference>
<dbReference type="GO" id="GO:0000049">
    <property type="term" value="F:tRNA binding"/>
    <property type="evidence" value="ECO:0007669"/>
    <property type="project" value="UniProtKB-KW"/>
</dbReference>
<dbReference type="GO" id="GO:0006412">
    <property type="term" value="P:translation"/>
    <property type="evidence" value="ECO:0007669"/>
    <property type="project" value="UniProtKB-UniRule"/>
</dbReference>
<dbReference type="CDD" id="cd01433">
    <property type="entry name" value="Ribosomal_L16_L10e"/>
    <property type="match status" value="1"/>
</dbReference>
<dbReference type="FunFam" id="3.90.1170.10:FF:000001">
    <property type="entry name" value="50S ribosomal protein L16"/>
    <property type="match status" value="1"/>
</dbReference>
<dbReference type="Gene3D" id="3.90.1170.10">
    <property type="entry name" value="Ribosomal protein L10e/L16"/>
    <property type="match status" value="1"/>
</dbReference>
<dbReference type="HAMAP" id="MF_01342">
    <property type="entry name" value="Ribosomal_uL16"/>
    <property type="match status" value="1"/>
</dbReference>
<dbReference type="InterPro" id="IPR047873">
    <property type="entry name" value="Ribosomal_uL16"/>
</dbReference>
<dbReference type="InterPro" id="IPR000114">
    <property type="entry name" value="Ribosomal_uL16_bact-type"/>
</dbReference>
<dbReference type="InterPro" id="IPR020798">
    <property type="entry name" value="Ribosomal_uL16_CS"/>
</dbReference>
<dbReference type="InterPro" id="IPR016180">
    <property type="entry name" value="Ribosomal_uL16_dom"/>
</dbReference>
<dbReference type="InterPro" id="IPR036920">
    <property type="entry name" value="Ribosomal_uL16_sf"/>
</dbReference>
<dbReference type="NCBIfam" id="TIGR01164">
    <property type="entry name" value="rplP_bact"/>
    <property type="match status" value="1"/>
</dbReference>
<dbReference type="PANTHER" id="PTHR12220">
    <property type="entry name" value="50S/60S RIBOSOMAL PROTEIN L16"/>
    <property type="match status" value="1"/>
</dbReference>
<dbReference type="PANTHER" id="PTHR12220:SF13">
    <property type="entry name" value="LARGE RIBOSOMAL SUBUNIT PROTEIN UL16M"/>
    <property type="match status" value="1"/>
</dbReference>
<dbReference type="Pfam" id="PF00252">
    <property type="entry name" value="Ribosomal_L16"/>
    <property type="match status" value="1"/>
</dbReference>
<dbReference type="PRINTS" id="PR00060">
    <property type="entry name" value="RIBOSOMALL16"/>
</dbReference>
<dbReference type="SUPFAM" id="SSF54686">
    <property type="entry name" value="Ribosomal protein L16p/L10e"/>
    <property type="match status" value="1"/>
</dbReference>
<dbReference type="PROSITE" id="PS00586">
    <property type="entry name" value="RIBOSOMAL_L16_1"/>
    <property type="match status" value="1"/>
</dbReference>
<dbReference type="PROSITE" id="PS00701">
    <property type="entry name" value="RIBOSOMAL_L16_2"/>
    <property type="match status" value="1"/>
</dbReference>
<comment type="function">
    <text evidence="1">Binds 23S rRNA and is also seen to make contacts with the A and possibly P site tRNAs.</text>
</comment>
<comment type="subunit">
    <text evidence="1">Part of the 50S ribosomal subunit.</text>
</comment>
<comment type="similarity">
    <text evidence="1">Belongs to the universal ribosomal protein uL16 family.</text>
</comment>
<accession>Q9ZJS0</accession>
<name>RL16_HELPJ</name>
<reference key="1">
    <citation type="journal article" date="1999" name="Nature">
        <title>Genomic sequence comparison of two unrelated isolates of the human gastric pathogen Helicobacter pylori.</title>
        <authorList>
            <person name="Alm R.A."/>
            <person name="Ling L.-S.L."/>
            <person name="Moir D.T."/>
            <person name="King B.L."/>
            <person name="Brown E.D."/>
            <person name="Doig P.C."/>
            <person name="Smith D.R."/>
            <person name="Noonan B."/>
            <person name="Guild B.C."/>
            <person name="deJonge B.L."/>
            <person name="Carmel G."/>
            <person name="Tummino P.J."/>
            <person name="Caruso A."/>
            <person name="Uria-Nickelsen M."/>
            <person name="Mills D.M."/>
            <person name="Ives C."/>
            <person name="Gibson R."/>
            <person name="Merberg D."/>
            <person name="Mills S.D."/>
            <person name="Jiang Q."/>
            <person name="Taylor D.E."/>
            <person name="Vovis G.F."/>
            <person name="Trust T.J."/>
        </authorList>
    </citation>
    <scope>NUCLEOTIDE SEQUENCE [LARGE SCALE GENOMIC DNA]</scope>
    <source>
        <strain>J99 / ATCC 700824</strain>
    </source>
</reference>
<keyword id="KW-0687">Ribonucleoprotein</keyword>
<keyword id="KW-0689">Ribosomal protein</keyword>
<keyword id="KW-0694">RNA-binding</keyword>
<keyword id="KW-0699">rRNA-binding</keyword>
<keyword id="KW-0820">tRNA-binding</keyword>
<protein>
    <recommendedName>
        <fullName evidence="1">Large ribosomal subunit protein uL16</fullName>
    </recommendedName>
    <alternativeName>
        <fullName evidence="3">50S ribosomal protein L16</fullName>
    </alternativeName>
</protein>